<proteinExistence type="inferred from homology"/>
<protein>
    <recommendedName>
        <fullName evidence="1">NAD kinase 2</fullName>
        <ecNumber evidence="1">2.7.1.23</ecNumber>
    </recommendedName>
    <alternativeName>
        <fullName evidence="1">ATP-dependent NAD kinase 2</fullName>
    </alternativeName>
</protein>
<dbReference type="EC" id="2.7.1.23" evidence="1"/>
<dbReference type="EMBL" id="AL939110">
    <property type="protein sequence ID" value="CAB52845.1"/>
    <property type="molecule type" value="Genomic_DNA"/>
</dbReference>
<dbReference type="PIR" id="T36884">
    <property type="entry name" value="T36884"/>
</dbReference>
<dbReference type="RefSeq" id="NP_626052.1">
    <property type="nucleotide sequence ID" value="NC_003888.3"/>
</dbReference>
<dbReference type="RefSeq" id="WP_011027973.1">
    <property type="nucleotide sequence ID" value="NZ_VNID01000018.1"/>
</dbReference>
<dbReference type="SMR" id="Q9S219"/>
<dbReference type="FunCoup" id="Q9S219">
    <property type="interactions" value="200"/>
</dbReference>
<dbReference type="STRING" id="100226.gene:17759375"/>
<dbReference type="PaxDb" id="100226-SCO1781"/>
<dbReference type="KEGG" id="sco:SCO1781"/>
<dbReference type="PATRIC" id="fig|100226.15.peg.1800"/>
<dbReference type="eggNOG" id="COG0061">
    <property type="taxonomic scope" value="Bacteria"/>
</dbReference>
<dbReference type="HOGENOM" id="CLU_008831_0_0_11"/>
<dbReference type="InParanoid" id="Q9S219"/>
<dbReference type="OrthoDB" id="9774737at2"/>
<dbReference type="PhylomeDB" id="Q9S219"/>
<dbReference type="Proteomes" id="UP000001973">
    <property type="component" value="Chromosome"/>
</dbReference>
<dbReference type="GO" id="GO:0005737">
    <property type="term" value="C:cytoplasm"/>
    <property type="evidence" value="ECO:0007669"/>
    <property type="project" value="UniProtKB-SubCell"/>
</dbReference>
<dbReference type="GO" id="GO:0005524">
    <property type="term" value="F:ATP binding"/>
    <property type="evidence" value="ECO:0007669"/>
    <property type="project" value="UniProtKB-KW"/>
</dbReference>
<dbReference type="GO" id="GO:0046872">
    <property type="term" value="F:metal ion binding"/>
    <property type="evidence" value="ECO:0007669"/>
    <property type="project" value="UniProtKB-UniRule"/>
</dbReference>
<dbReference type="GO" id="GO:0051287">
    <property type="term" value="F:NAD binding"/>
    <property type="evidence" value="ECO:0007669"/>
    <property type="project" value="UniProtKB-ARBA"/>
</dbReference>
<dbReference type="GO" id="GO:0003951">
    <property type="term" value="F:NAD+ kinase activity"/>
    <property type="evidence" value="ECO:0000318"/>
    <property type="project" value="GO_Central"/>
</dbReference>
<dbReference type="GO" id="GO:0019674">
    <property type="term" value="P:NAD metabolic process"/>
    <property type="evidence" value="ECO:0007669"/>
    <property type="project" value="InterPro"/>
</dbReference>
<dbReference type="GO" id="GO:0006741">
    <property type="term" value="P:NADP biosynthetic process"/>
    <property type="evidence" value="ECO:0000318"/>
    <property type="project" value="GO_Central"/>
</dbReference>
<dbReference type="FunFam" id="2.60.200.30:FF:000007">
    <property type="entry name" value="NAD kinase"/>
    <property type="match status" value="1"/>
</dbReference>
<dbReference type="Gene3D" id="3.40.50.10330">
    <property type="entry name" value="Probable inorganic polyphosphate/atp-NAD kinase, domain 1"/>
    <property type="match status" value="1"/>
</dbReference>
<dbReference type="Gene3D" id="2.60.200.30">
    <property type="entry name" value="Probable inorganic polyphosphate/atp-NAD kinase, domain 2"/>
    <property type="match status" value="1"/>
</dbReference>
<dbReference type="HAMAP" id="MF_00361">
    <property type="entry name" value="NAD_kinase"/>
    <property type="match status" value="1"/>
</dbReference>
<dbReference type="InterPro" id="IPR017438">
    <property type="entry name" value="ATP-NAD_kinase_N"/>
</dbReference>
<dbReference type="InterPro" id="IPR017437">
    <property type="entry name" value="ATP-NAD_kinase_PpnK-typ_C"/>
</dbReference>
<dbReference type="InterPro" id="IPR016064">
    <property type="entry name" value="NAD/diacylglycerol_kinase_sf"/>
</dbReference>
<dbReference type="InterPro" id="IPR002504">
    <property type="entry name" value="NADK"/>
</dbReference>
<dbReference type="NCBIfam" id="NF002892">
    <property type="entry name" value="PRK03372.1"/>
    <property type="match status" value="1"/>
</dbReference>
<dbReference type="PANTHER" id="PTHR20275">
    <property type="entry name" value="NAD KINASE"/>
    <property type="match status" value="1"/>
</dbReference>
<dbReference type="PANTHER" id="PTHR20275:SF0">
    <property type="entry name" value="NAD KINASE"/>
    <property type="match status" value="1"/>
</dbReference>
<dbReference type="Pfam" id="PF01513">
    <property type="entry name" value="NAD_kinase"/>
    <property type="match status" value="1"/>
</dbReference>
<dbReference type="Pfam" id="PF20143">
    <property type="entry name" value="NAD_kinase_C"/>
    <property type="match status" value="1"/>
</dbReference>
<dbReference type="SUPFAM" id="SSF111331">
    <property type="entry name" value="NAD kinase/diacylglycerol kinase-like"/>
    <property type="match status" value="1"/>
</dbReference>
<comment type="function">
    <text evidence="1">Involved in the regulation of the intracellular balance of NAD and NADP, and is a key enzyme in the biosynthesis of NADP. Catalyzes specifically the phosphorylation on 2'-hydroxyl of the adenosine moiety of NAD to yield NADP.</text>
</comment>
<comment type="catalytic activity">
    <reaction evidence="1">
        <text>NAD(+) + ATP = ADP + NADP(+) + H(+)</text>
        <dbReference type="Rhea" id="RHEA:18629"/>
        <dbReference type="ChEBI" id="CHEBI:15378"/>
        <dbReference type="ChEBI" id="CHEBI:30616"/>
        <dbReference type="ChEBI" id="CHEBI:57540"/>
        <dbReference type="ChEBI" id="CHEBI:58349"/>
        <dbReference type="ChEBI" id="CHEBI:456216"/>
        <dbReference type="EC" id="2.7.1.23"/>
    </reaction>
</comment>
<comment type="cofactor">
    <cofactor evidence="1">
        <name>a divalent metal cation</name>
        <dbReference type="ChEBI" id="CHEBI:60240"/>
    </cofactor>
</comment>
<comment type="subcellular location">
    <subcellularLocation>
        <location evidence="1">Cytoplasm</location>
    </subcellularLocation>
</comment>
<comment type="similarity">
    <text evidence="1">Belongs to the NAD kinase family.</text>
</comment>
<organism>
    <name type="scientific">Streptomyces coelicolor (strain ATCC BAA-471 / A3(2) / M145)</name>
    <dbReference type="NCBI Taxonomy" id="100226"/>
    <lineage>
        <taxon>Bacteria</taxon>
        <taxon>Bacillati</taxon>
        <taxon>Actinomycetota</taxon>
        <taxon>Actinomycetes</taxon>
        <taxon>Kitasatosporales</taxon>
        <taxon>Streptomycetaceae</taxon>
        <taxon>Streptomyces</taxon>
        <taxon>Streptomyces albidoflavus group</taxon>
    </lineage>
</organism>
<reference key="1">
    <citation type="journal article" date="2002" name="Nature">
        <title>Complete genome sequence of the model actinomycete Streptomyces coelicolor A3(2).</title>
        <authorList>
            <person name="Bentley S.D."/>
            <person name="Chater K.F."/>
            <person name="Cerdeno-Tarraga A.-M."/>
            <person name="Challis G.L."/>
            <person name="Thomson N.R."/>
            <person name="James K.D."/>
            <person name="Harris D.E."/>
            <person name="Quail M.A."/>
            <person name="Kieser H."/>
            <person name="Harper D."/>
            <person name="Bateman A."/>
            <person name="Brown S."/>
            <person name="Chandra G."/>
            <person name="Chen C.W."/>
            <person name="Collins M."/>
            <person name="Cronin A."/>
            <person name="Fraser A."/>
            <person name="Goble A."/>
            <person name="Hidalgo J."/>
            <person name="Hornsby T."/>
            <person name="Howarth S."/>
            <person name="Huang C.-H."/>
            <person name="Kieser T."/>
            <person name="Larke L."/>
            <person name="Murphy L.D."/>
            <person name="Oliver K."/>
            <person name="O'Neil S."/>
            <person name="Rabbinowitsch E."/>
            <person name="Rajandream M.A."/>
            <person name="Rutherford K.M."/>
            <person name="Rutter S."/>
            <person name="Seeger K."/>
            <person name="Saunders D."/>
            <person name="Sharp S."/>
            <person name="Squares R."/>
            <person name="Squares S."/>
            <person name="Taylor K."/>
            <person name="Warren T."/>
            <person name="Wietzorrek A."/>
            <person name="Woodward J.R."/>
            <person name="Barrell B.G."/>
            <person name="Parkhill J."/>
            <person name="Hopwood D.A."/>
        </authorList>
    </citation>
    <scope>NUCLEOTIDE SEQUENCE [LARGE SCALE GENOMIC DNA]</scope>
    <source>
        <strain>ATCC BAA-471 / A3(2) / M145</strain>
    </source>
</reference>
<keyword id="KW-0067">ATP-binding</keyword>
<keyword id="KW-0963">Cytoplasm</keyword>
<keyword id="KW-0418">Kinase</keyword>
<keyword id="KW-0520">NAD</keyword>
<keyword id="KW-0521">NADP</keyword>
<keyword id="KW-0547">Nucleotide-binding</keyword>
<keyword id="KW-1185">Reference proteome</keyword>
<keyword id="KW-0808">Transferase</keyword>
<name>NADK2_STRCO</name>
<evidence type="ECO:0000255" key="1">
    <source>
        <dbReference type="HAMAP-Rule" id="MF_00361"/>
    </source>
</evidence>
<accession>Q9S219</accession>
<sequence>MTQNRVRTVFLLAHTGRPAAIRSAELVVKGLLRAGIGVRVLEAEARDLPLPGEVELVGEATPQCLDGCELLIVLGGDGTLLRGAEFARASGVPMLGVNLGRVGFLAEAERDDLDKVVDRVVNRAYEVEERMTVDVVVHRNGDIVHTDWALNEAAVQKAGAEKLLEVVLEIDGRPVTGFGCDGIVLSTPTGSTAYAFSAGGPVVWPEVEALLMVPISAHALFAKPLVTSPDSVLAVEVLPHVPPGVLWCDGRRTVELPPGARVEVRRGAVPVRLARLHHASFTDRLVAKFALPVSGWRGAPH</sequence>
<feature type="chain" id="PRO_0000120669" description="NAD kinase 2">
    <location>
        <begin position="1"/>
        <end position="301"/>
    </location>
</feature>
<feature type="active site" description="Proton acceptor" evidence="1">
    <location>
        <position position="77"/>
    </location>
</feature>
<feature type="binding site" evidence="1">
    <location>
        <begin position="77"/>
        <end position="78"/>
    </location>
    <ligand>
        <name>NAD(+)</name>
        <dbReference type="ChEBI" id="CHEBI:57540"/>
    </ligand>
</feature>
<feature type="binding site" evidence="1">
    <location>
        <position position="82"/>
    </location>
    <ligand>
        <name>NAD(+)</name>
        <dbReference type="ChEBI" id="CHEBI:57540"/>
    </ligand>
</feature>
<feature type="binding site" evidence="1">
    <location>
        <begin position="151"/>
        <end position="152"/>
    </location>
    <ligand>
        <name>NAD(+)</name>
        <dbReference type="ChEBI" id="CHEBI:57540"/>
    </ligand>
</feature>
<feature type="binding site" evidence="1">
    <location>
        <position position="162"/>
    </location>
    <ligand>
        <name>NAD(+)</name>
        <dbReference type="ChEBI" id="CHEBI:57540"/>
    </ligand>
</feature>
<feature type="binding site" evidence="1">
    <location>
        <position position="181"/>
    </location>
    <ligand>
        <name>NAD(+)</name>
        <dbReference type="ChEBI" id="CHEBI:57540"/>
    </ligand>
</feature>
<feature type="binding site" evidence="1">
    <location>
        <begin position="192"/>
        <end position="197"/>
    </location>
    <ligand>
        <name>NAD(+)</name>
        <dbReference type="ChEBI" id="CHEBI:57540"/>
    </ligand>
</feature>
<gene>
    <name evidence="1" type="primary">nadK2</name>
    <name type="ordered locus">SCO1781</name>
    <name type="ORF">SCI51.21c</name>
</gene>